<feature type="chain" id="PRO_1000006881" description="Phenylalanine--tRNA ligase alpha subunit">
    <location>
        <begin position="1"/>
        <end position="360"/>
    </location>
</feature>
<feature type="binding site" evidence="1">
    <location>
        <position position="260"/>
    </location>
    <ligand>
        <name>Mg(2+)</name>
        <dbReference type="ChEBI" id="CHEBI:18420"/>
        <note>shared with beta subunit</note>
    </ligand>
</feature>
<organism>
    <name type="scientific">Rhizobium johnstonii (strain DSM 114642 / LMG 32736 / 3841)</name>
    <name type="common">Rhizobium leguminosarum bv. viciae</name>
    <dbReference type="NCBI Taxonomy" id="216596"/>
    <lineage>
        <taxon>Bacteria</taxon>
        <taxon>Pseudomonadati</taxon>
        <taxon>Pseudomonadota</taxon>
        <taxon>Alphaproteobacteria</taxon>
        <taxon>Hyphomicrobiales</taxon>
        <taxon>Rhizobiaceae</taxon>
        <taxon>Rhizobium/Agrobacterium group</taxon>
        <taxon>Rhizobium</taxon>
        <taxon>Rhizobium johnstonii</taxon>
    </lineage>
</organism>
<sequence length="360" mass="40192">MSDIDQLNTSLLAEIAAADDETALEAVRVSALGKKGSVSELLKTLGAMTPEERQSKGAAINVLKNAVTEALTARKTTLRQAAIDARLQAETVDVSLPVRSSPAERGRIHPISQIVDEITAIFADMGFSIAEGPDIETDYYNFTALNFPEGHPAREMHDTFFFNPDENGERKVLRTHTSPVQVRTMEAQTPPIRIIIPGKTYRQDSDATHSPMFHQVEGLVVDKKANVANLRWVLEEFCKTFFEVDSVTMRFRPSFFPFTEPSFEVDIQCDRSGPIVKFGEGTDWMEILGCGMVHPNVLRYGGLDPDEYQGFAWGMGLDRIAMLKYGMPDLRDFFNADVRWMTHYGFRPLDMPTLFGGLSA</sequence>
<accession>Q1MMP3</accession>
<gene>
    <name evidence="1" type="primary">pheS</name>
    <name type="ordered locus">RL0269</name>
</gene>
<comment type="catalytic activity">
    <reaction evidence="1">
        <text>tRNA(Phe) + L-phenylalanine + ATP = L-phenylalanyl-tRNA(Phe) + AMP + diphosphate + H(+)</text>
        <dbReference type="Rhea" id="RHEA:19413"/>
        <dbReference type="Rhea" id="RHEA-COMP:9668"/>
        <dbReference type="Rhea" id="RHEA-COMP:9699"/>
        <dbReference type="ChEBI" id="CHEBI:15378"/>
        <dbReference type="ChEBI" id="CHEBI:30616"/>
        <dbReference type="ChEBI" id="CHEBI:33019"/>
        <dbReference type="ChEBI" id="CHEBI:58095"/>
        <dbReference type="ChEBI" id="CHEBI:78442"/>
        <dbReference type="ChEBI" id="CHEBI:78531"/>
        <dbReference type="ChEBI" id="CHEBI:456215"/>
        <dbReference type="EC" id="6.1.1.20"/>
    </reaction>
</comment>
<comment type="cofactor">
    <cofactor evidence="1">
        <name>Mg(2+)</name>
        <dbReference type="ChEBI" id="CHEBI:18420"/>
    </cofactor>
    <text evidence="1">Binds 2 magnesium ions per tetramer.</text>
</comment>
<comment type="subunit">
    <text evidence="1">Tetramer of two alpha and two beta subunits.</text>
</comment>
<comment type="subcellular location">
    <subcellularLocation>
        <location evidence="1">Cytoplasm</location>
    </subcellularLocation>
</comment>
<comment type="similarity">
    <text evidence="1">Belongs to the class-II aminoacyl-tRNA synthetase family. Phe-tRNA synthetase alpha subunit type 1 subfamily.</text>
</comment>
<name>SYFA_RHIJ3</name>
<proteinExistence type="inferred from homology"/>
<reference key="1">
    <citation type="journal article" date="2006" name="Genome Biol.">
        <title>The genome of Rhizobium leguminosarum has recognizable core and accessory components.</title>
        <authorList>
            <person name="Young J.P.W."/>
            <person name="Crossman L.C."/>
            <person name="Johnston A.W.B."/>
            <person name="Thomson N.R."/>
            <person name="Ghazoui Z.F."/>
            <person name="Hull K.H."/>
            <person name="Wexler M."/>
            <person name="Curson A.R.J."/>
            <person name="Todd J.D."/>
            <person name="Poole P.S."/>
            <person name="Mauchline T.H."/>
            <person name="East A.K."/>
            <person name="Quail M.A."/>
            <person name="Churcher C."/>
            <person name="Arrowsmith C."/>
            <person name="Cherevach I."/>
            <person name="Chillingworth T."/>
            <person name="Clarke K."/>
            <person name="Cronin A."/>
            <person name="Davis P."/>
            <person name="Fraser A."/>
            <person name="Hance Z."/>
            <person name="Hauser H."/>
            <person name="Jagels K."/>
            <person name="Moule S."/>
            <person name="Mungall K."/>
            <person name="Norbertczak H."/>
            <person name="Rabbinowitsch E."/>
            <person name="Sanders M."/>
            <person name="Simmonds M."/>
            <person name="Whitehead S."/>
            <person name="Parkhill J."/>
        </authorList>
    </citation>
    <scope>NUCLEOTIDE SEQUENCE [LARGE SCALE GENOMIC DNA]</scope>
    <source>
        <strain>DSM 114642 / LMG 32736 / 3841</strain>
    </source>
</reference>
<protein>
    <recommendedName>
        <fullName evidence="1">Phenylalanine--tRNA ligase alpha subunit</fullName>
        <ecNumber evidence="1">6.1.1.20</ecNumber>
    </recommendedName>
    <alternativeName>
        <fullName evidence="1">Phenylalanyl-tRNA synthetase alpha subunit</fullName>
        <shortName evidence="1">PheRS</shortName>
    </alternativeName>
</protein>
<dbReference type="EC" id="6.1.1.20" evidence="1"/>
<dbReference type="EMBL" id="AM236080">
    <property type="protein sequence ID" value="CAK05759.1"/>
    <property type="molecule type" value="Genomic_DNA"/>
</dbReference>
<dbReference type="RefSeq" id="WP_011650074.1">
    <property type="nucleotide sequence ID" value="NC_008380.1"/>
</dbReference>
<dbReference type="SMR" id="Q1MMP3"/>
<dbReference type="EnsemblBacteria" id="CAK05759">
    <property type="protein sequence ID" value="CAK05759"/>
    <property type="gene ID" value="RL0269"/>
</dbReference>
<dbReference type="KEGG" id="rle:RL0269"/>
<dbReference type="eggNOG" id="COG0016">
    <property type="taxonomic scope" value="Bacteria"/>
</dbReference>
<dbReference type="HOGENOM" id="CLU_025086_0_1_5"/>
<dbReference type="Proteomes" id="UP000006575">
    <property type="component" value="Chromosome"/>
</dbReference>
<dbReference type="GO" id="GO:0005737">
    <property type="term" value="C:cytoplasm"/>
    <property type="evidence" value="ECO:0007669"/>
    <property type="project" value="UniProtKB-SubCell"/>
</dbReference>
<dbReference type="GO" id="GO:0005524">
    <property type="term" value="F:ATP binding"/>
    <property type="evidence" value="ECO:0007669"/>
    <property type="project" value="UniProtKB-UniRule"/>
</dbReference>
<dbReference type="GO" id="GO:0000287">
    <property type="term" value="F:magnesium ion binding"/>
    <property type="evidence" value="ECO:0007669"/>
    <property type="project" value="UniProtKB-UniRule"/>
</dbReference>
<dbReference type="GO" id="GO:0004826">
    <property type="term" value="F:phenylalanine-tRNA ligase activity"/>
    <property type="evidence" value="ECO:0007669"/>
    <property type="project" value="UniProtKB-UniRule"/>
</dbReference>
<dbReference type="GO" id="GO:0000049">
    <property type="term" value="F:tRNA binding"/>
    <property type="evidence" value="ECO:0007669"/>
    <property type="project" value="InterPro"/>
</dbReference>
<dbReference type="GO" id="GO:0006432">
    <property type="term" value="P:phenylalanyl-tRNA aminoacylation"/>
    <property type="evidence" value="ECO:0007669"/>
    <property type="project" value="UniProtKB-UniRule"/>
</dbReference>
<dbReference type="CDD" id="cd00496">
    <property type="entry name" value="PheRS_alpha_core"/>
    <property type="match status" value="1"/>
</dbReference>
<dbReference type="FunFam" id="3.30.930.10:FF:000003">
    <property type="entry name" value="Phenylalanine--tRNA ligase alpha subunit"/>
    <property type="match status" value="1"/>
</dbReference>
<dbReference type="Gene3D" id="3.30.930.10">
    <property type="entry name" value="Bira Bifunctional Protein, Domain 2"/>
    <property type="match status" value="1"/>
</dbReference>
<dbReference type="HAMAP" id="MF_00281">
    <property type="entry name" value="Phe_tRNA_synth_alpha1"/>
    <property type="match status" value="1"/>
</dbReference>
<dbReference type="InterPro" id="IPR006195">
    <property type="entry name" value="aa-tRNA-synth_II"/>
</dbReference>
<dbReference type="InterPro" id="IPR045864">
    <property type="entry name" value="aa-tRNA-synth_II/BPL/LPL"/>
</dbReference>
<dbReference type="InterPro" id="IPR004529">
    <property type="entry name" value="Phe-tRNA-synth_IIc_asu"/>
</dbReference>
<dbReference type="InterPro" id="IPR004188">
    <property type="entry name" value="Phe-tRNA_ligase_II_N"/>
</dbReference>
<dbReference type="InterPro" id="IPR022911">
    <property type="entry name" value="Phe_tRNA_ligase_alpha1_bac"/>
</dbReference>
<dbReference type="InterPro" id="IPR002319">
    <property type="entry name" value="Phenylalanyl-tRNA_Synthase"/>
</dbReference>
<dbReference type="InterPro" id="IPR010978">
    <property type="entry name" value="tRNA-bd_arm"/>
</dbReference>
<dbReference type="NCBIfam" id="TIGR00468">
    <property type="entry name" value="pheS"/>
    <property type="match status" value="1"/>
</dbReference>
<dbReference type="PANTHER" id="PTHR11538:SF41">
    <property type="entry name" value="PHENYLALANINE--TRNA LIGASE, MITOCHONDRIAL"/>
    <property type="match status" value="1"/>
</dbReference>
<dbReference type="PANTHER" id="PTHR11538">
    <property type="entry name" value="PHENYLALANYL-TRNA SYNTHETASE"/>
    <property type="match status" value="1"/>
</dbReference>
<dbReference type="Pfam" id="PF02912">
    <property type="entry name" value="Phe_tRNA-synt_N"/>
    <property type="match status" value="1"/>
</dbReference>
<dbReference type="Pfam" id="PF01409">
    <property type="entry name" value="tRNA-synt_2d"/>
    <property type="match status" value="1"/>
</dbReference>
<dbReference type="SUPFAM" id="SSF55681">
    <property type="entry name" value="Class II aaRS and biotin synthetases"/>
    <property type="match status" value="1"/>
</dbReference>
<dbReference type="SUPFAM" id="SSF46589">
    <property type="entry name" value="tRNA-binding arm"/>
    <property type="match status" value="1"/>
</dbReference>
<dbReference type="PROSITE" id="PS50862">
    <property type="entry name" value="AA_TRNA_LIGASE_II"/>
    <property type="match status" value="1"/>
</dbReference>
<keyword id="KW-0030">Aminoacyl-tRNA synthetase</keyword>
<keyword id="KW-0067">ATP-binding</keyword>
<keyword id="KW-0963">Cytoplasm</keyword>
<keyword id="KW-0436">Ligase</keyword>
<keyword id="KW-0460">Magnesium</keyword>
<keyword id="KW-0479">Metal-binding</keyword>
<keyword id="KW-0547">Nucleotide-binding</keyword>
<keyword id="KW-0648">Protein biosynthesis</keyword>
<evidence type="ECO:0000255" key="1">
    <source>
        <dbReference type="HAMAP-Rule" id="MF_00281"/>
    </source>
</evidence>